<keyword id="KW-0002">3D-structure</keyword>
<keyword id="KW-0007">Acetylation</keyword>
<keyword id="KW-0025">Alternative splicing</keyword>
<keyword id="KW-0067">ATP-binding</keyword>
<keyword id="KW-0963">Cytoplasm</keyword>
<keyword id="KW-0903">Direct protein sequencing</keyword>
<keyword id="KW-0225">Disease variant</keyword>
<keyword id="KW-0418">Kinase</keyword>
<keyword id="KW-0460">Magnesium</keyword>
<keyword id="KW-0479">Metal-binding</keyword>
<keyword id="KW-0547">Nucleotide-binding</keyword>
<keyword id="KW-0539">Nucleus</keyword>
<keyword id="KW-0597">Phosphoprotein</keyword>
<keyword id="KW-1267">Proteomics identification</keyword>
<keyword id="KW-0660">Purine salvage</keyword>
<keyword id="KW-1185">Reference proteome</keyword>
<keyword id="KW-0808">Transferase</keyword>
<proteinExistence type="evidence at protein level"/>
<accession>P55263</accession>
<accession>B7Z783</accession>
<accession>B7Z800</accession>
<accession>O00741</accession>
<accession>O00742</accession>
<accession>Q16710</accession>
<accession>Q5JQ10</accession>
<accession>Q5JQ11</accession>
<accession>Q9BTN2</accession>
<evidence type="ECO:0000269" key="1">
    <source>
    </source>
</evidence>
<evidence type="ECO:0000269" key="2">
    <source>
    </source>
</evidence>
<evidence type="ECO:0000269" key="3">
    <source>
    </source>
</evidence>
<evidence type="ECO:0000269" key="4">
    <source>
    </source>
</evidence>
<evidence type="ECO:0000269" key="5">
    <source>
    </source>
</evidence>
<evidence type="ECO:0000269" key="6">
    <source>
    </source>
</evidence>
<evidence type="ECO:0000303" key="7">
    <source>
    </source>
</evidence>
<evidence type="ECO:0000303" key="8">
    <source>
    </source>
</evidence>
<evidence type="ECO:0000303" key="9">
    <source>
    </source>
</evidence>
<evidence type="ECO:0000303" key="10">
    <source>
    </source>
</evidence>
<evidence type="ECO:0000305" key="11"/>
<evidence type="ECO:0000305" key="12">
    <source>
    </source>
</evidence>
<evidence type="ECO:0000312" key="13">
    <source>
        <dbReference type="HGNC" id="HGNC:257"/>
    </source>
</evidence>
<evidence type="ECO:0007744" key="14">
    <source>
        <dbReference type="PDB" id="1BX4"/>
    </source>
</evidence>
<evidence type="ECO:0007744" key="15">
    <source>
    </source>
</evidence>
<evidence type="ECO:0007744" key="16">
    <source>
    </source>
</evidence>
<evidence type="ECO:0007829" key="17">
    <source>
        <dbReference type="PDB" id="1BX4"/>
    </source>
</evidence>
<evidence type="ECO:0007829" key="18">
    <source>
        <dbReference type="PDB" id="2I6B"/>
    </source>
</evidence>
<reference key="1">
    <citation type="journal article" date="1996" name="Proc. Natl. Acad. Sci. U.S.A.">
        <title>Cloning of human adenosine kinase cDNA: sequence similarity to microbial ribokinases and fructokinases.</title>
        <authorList>
            <person name="Spychala J."/>
            <person name="Datta N.S."/>
            <person name="Takabayashi K."/>
            <person name="Datta M."/>
            <person name="Fox I.H."/>
            <person name="Gribbin T."/>
            <person name="Mitchell B.S."/>
        </authorList>
    </citation>
    <scope>NUCLEOTIDE SEQUENCE [MRNA] (ISOFORM 2)</scope>
    <scope>PROTEIN SEQUENCE OF 94-133; 175-200 AND 272-289</scope>
    <scope>CATALYTIC ACTIVITY</scope>
    <scope>FUNCTION</scope>
    <scope>BIOPHYSICOCHEMICAL PROPERTIES</scope>
    <source>
        <tissue>Liver</tissue>
    </source>
</reference>
<reference key="2">
    <citation type="journal article" date="1996" name="Eur. J. Biochem.">
        <title>Cloning and characterization of cDNA for adenosine kinase from mammalian (Chinese hamster, mouse, human and rat) species. High frequency mutants of Chinese hamster ovary cells involve structural alterations in the gene.</title>
        <authorList>
            <person name="Singh B."/>
            <person name="Hao W."/>
            <person name="Wu Z.-C."/>
            <person name="Eigl B."/>
            <person name="Gupta R.S."/>
        </authorList>
    </citation>
    <scope>NUCLEOTIDE SEQUENCE [MRNA] (ISOFORM 1)</scope>
</reference>
<reference key="3">
    <citation type="journal article" date="1997" name="Biochem. Biophys. Res. Commun.">
        <title>Cloning and expression of the adenosine kinase gene from rat and human tissues.</title>
        <authorList>
            <person name="McNally T."/>
            <person name="Helfrich R.J."/>
            <person name="Cowart M."/>
            <person name="Dorwin S.A."/>
            <person name="Meuth J.L."/>
            <person name="Idler K.B."/>
            <person name="Klute K.A."/>
            <person name="Simmer R.L."/>
            <person name="Kowaluk E.A."/>
            <person name="Halbert D.N."/>
        </authorList>
    </citation>
    <scope>NUCLEOTIDE SEQUENCE [MRNA] (ISOFORMS 1 AND 2)</scope>
    <scope>ALTERNATIVE SPLICING</scope>
    <scope>CATALYTIC ACTIVITY</scope>
    <scope>FUNCTION</scope>
    <scope>COFACTOR</scope>
    <scope>BIOPHYSICOCHEMICAL PROPERTIES</scope>
    <scope>TISSUE SPECIFICITY</scope>
</reference>
<reference key="4">
    <citation type="journal article" date="2004" name="Nat. Genet.">
        <title>Complete sequencing and characterization of 21,243 full-length human cDNAs.</title>
        <authorList>
            <person name="Ota T."/>
            <person name="Suzuki Y."/>
            <person name="Nishikawa T."/>
            <person name="Otsuki T."/>
            <person name="Sugiyama T."/>
            <person name="Irie R."/>
            <person name="Wakamatsu A."/>
            <person name="Hayashi K."/>
            <person name="Sato H."/>
            <person name="Nagai K."/>
            <person name="Kimura K."/>
            <person name="Makita H."/>
            <person name="Sekine M."/>
            <person name="Obayashi M."/>
            <person name="Nishi T."/>
            <person name="Shibahara T."/>
            <person name="Tanaka T."/>
            <person name="Ishii S."/>
            <person name="Yamamoto J."/>
            <person name="Saito K."/>
            <person name="Kawai Y."/>
            <person name="Isono Y."/>
            <person name="Nakamura Y."/>
            <person name="Nagahari K."/>
            <person name="Murakami K."/>
            <person name="Yasuda T."/>
            <person name="Iwayanagi T."/>
            <person name="Wagatsuma M."/>
            <person name="Shiratori A."/>
            <person name="Sudo H."/>
            <person name="Hosoiri T."/>
            <person name="Kaku Y."/>
            <person name="Kodaira H."/>
            <person name="Kondo H."/>
            <person name="Sugawara M."/>
            <person name="Takahashi M."/>
            <person name="Kanda K."/>
            <person name="Yokoi T."/>
            <person name="Furuya T."/>
            <person name="Kikkawa E."/>
            <person name="Omura Y."/>
            <person name="Abe K."/>
            <person name="Kamihara K."/>
            <person name="Katsuta N."/>
            <person name="Sato K."/>
            <person name="Tanikawa M."/>
            <person name="Yamazaki M."/>
            <person name="Ninomiya K."/>
            <person name="Ishibashi T."/>
            <person name="Yamashita H."/>
            <person name="Murakawa K."/>
            <person name="Fujimori K."/>
            <person name="Tanai H."/>
            <person name="Kimata M."/>
            <person name="Watanabe M."/>
            <person name="Hiraoka S."/>
            <person name="Chiba Y."/>
            <person name="Ishida S."/>
            <person name="Ono Y."/>
            <person name="Takiguchi S."/>
            <person name="Watanabe S."/>
            <person name="Yosida M."/>
            <person name="Hotuta T."/>
            <person name="Kusano J."/>
            <person name="Kanehori K."/>
            <person name="Takahashi-Fujii A."/>
            <person name="Hara H."/>
            <person name="Tanase T.-O."/>
            <person name="Nomura Y."/>
            <person name="Togiya S."/>
            <person name="Komai F."/>
            <person name="Hara R."/>
            <person name="Takeuchi K."/>
            <person name="Arita M."/>
            <person name="Imose N."/>
            <person name="Musashino K."/>
            <person name="Yuuki H."/>
            <person name="Oshima A."/>
            <person name="Sasaki N."/>
            <person name="Aotsuka S."/>
            <person name="Yoshikawa Y."/>
            <person name="Matsunawa H."/>
            <person name="Ichihara T."/>
            <person name="Shiohata N."/>
            <person name="Sano S."/>
            <person name="Moriya S."/>
            <person name="Momiyama H."/>
            <person name="Satoh N."/>
            <person name="Takami S."/>
            <person name="Terashima Y."/>
            <person name="Suzuki O."/>
            <person name="Nakagawa S."/>
            <person name="Senoh A."/>
            <person name="Mizoguchi H."/>
            <person name="Goto Y."/>
            <person name="Shimizu F."/>
            <person name="Wakebe H."/>
            <person name="Hishigaki H."/>
            <person name="Watanabe T."/>
            <person name="Sugiyama A."/>
            <person name="Takemoto M."/>
            <person name="Kawakami B."/>
            <person name="Yamazaki M."/>
            <person name="Watanabe K."/>
            <person name="Kumagai A."/>
            <person name="Itakura S."/>
            <person name="Fukuzumi Y."/>
            <person name="Fujimori Y."/>
            <person name="Komiyama M."/>
            <person name="Tashiro H."/>
            <person name="Tanigami A."/>
            <person name="Fujiwara T."/>
            <person name="Ono T."/>
            <person name="Yamada K."/>
            <person name="Fujii Y."/>
            <person name="Ozaki K."/>
            <person name="Hirao M."/>
            <person name="Ohmori Y."/>
            <person name="Kawabata A."/>
            <person name="Hikiji T."/>
            <person name="Kobatake N."/>
            <person name="Inagaki H."/>
            <person name="Ikema Y."/>
            <person name="Okamoto S."/>
            <person name="Okitani R."/>
            <person name="Kawakami T."/>
            <person name="Noguchi S."/>
            <person name="Itoh T."/>
            <person name="Shigeta K."/>
            <person name="Senba T."/>
            <person name="Matsumura K."/>
            <person name="Nakajima Y."/>
            <person name="Mizuno T."/>
            <person name="Morinaga M."/>
            <person name="Sasaki M."/>
            <person name="Togashi T."/>
            <person name="Oyama M."/>
            <person name="Hata H."/>
            <person name="Watanabe M."/>
            <person name="Komatsu T."/>
            <person name="Mizushima-Sugano J."/>
            <person name="Satoh T."/>
            <person name="Shirai Y."/>
            <person name="Takahashi Y."/>
            <person name="Nakagawa K."/>
            <person name="Okumura K."/>
            <person name="Nagase T."/>
            <person name="Nomura N."/>
            <person name="Kikuchi H."/>
            <person name="Masuho Y."/>
            <person name="Yamashita R."/>
            <person name="Nakai K."/>
            <person name="Yada T."/>
            <person name="Nakamura Y."/>
            <person name="Ohara O."/>
            <person name="Isogai T."/>
            <person name="Sugano S."/>
        </authorList>
    </citation>
    <scope>NUCLEOTIDE SEQUENCE [LARGE SCALE MRNA] (ISOFORMS 2; 3 AND 4)</scope>
    <source>
        <tissue>Mammary gland</tissue>
        <tissue>Testis</tissue>
    </source>
</reference>
<reference key="5">
    <citation type="journal article" date="2004" name="Nature">
        <title>The DNA sequence and comparative analysis of human chromosome 10.</title>
        <authorList>
            <person name="Deloukas P."/>
            <person name="Earthrowl M.E."/>
            <person name="Grafham D.V."/>
            <person name="Rubenfield M."/>
            <person name="French L."/>
            <person name="Steward C.A."/>
            <person name="Sims S.K."/>
            <person name="Jones M.C."/>
            <person name="Searle S."/>
            <person name="Scott C."/>
            <person name="Howe K."/>
            <person name="Hunt S.E."/>
            <person name="Andrews T.D."/>
            <person name="Gilbert J.G.R."/>
            <person name="Swarbreck D."/>
            <person name="Ashurst J.L."/>
            <person name="Taylor A."/>
            <person name="Battles J."/>
            <person name="Bird C.P."/>
            <person name="Ainscough R."/>
            <person name="Almeida J.P."/>
            <person name="Ashwell R.I.S."/>
            <person name="Ambrose K.D."/>
            <person name="Babbage A.K."/>
            <person name="Bagguley C.L."/>
            <person name="Bailey J."/>
            <person name="Banerjee R."/>
            <person name="Bates K."/>
            <person name="Beasley H."/>
            <person name="Bray-Allen S."/>
            <person name="Brown A.J."/>
            <person name="Brown J.Y."/>
            <person name="Burford D.C."/>
            <person name="Burrill W."/>
            <person name="Burton J."/>
            <person name="Cahill P."/>
            <person name="Camire D."/>
            <person name="Carter N.P."/>
            <person name="Chapman J.C."/>
            <person name="Clark S.Y."/>
            <person name="Clarke G."/>
            <person name="Clee C.M."/>
            <person name="Clegg S."/>
            <person name="Corby N."/>
            <person name="Coulson A."/>
            <person name="Dhami P."/>
            <person name="Dutta I."/>
            <person name="Dunn M."/>
            <person name="Faulkner L."/>
            <person name="Frankish A."/>
            <person name="Frankland J.A."/>
            <person name="Garner P."/>
            <person name="Garnett J."/>
            <person name="Gribble S."/>
            <person name="Griffiths C."/>
            <person name="Grocock R."/>
            <person name="Gustafson E."/>
            <person name="Hammond S."/>
            <person name="Harley J.L."/>
            <person name="Hart E."/>
            <person name="Heath P.D."/>
            <person name="Ho T.P."/>
            <person name="Hopkins B."/>
            <person name="Horne J."/>
            <person name="Howden P.J."/>
            <person name="Huckle E."/>
            <person name="Hynds C."/>
            <person name="Johnson C."/>
            <person name="Johnson D."/>
            <person name="Kana A."/>
            <person name="Kay M."/>
            <person name="Kimberley A.M."/>
            <person name="Kershaw J.K."/>
            <person name="Kokkinaki M."/>
            <person name="Laird G.K."/>
            <person name="Lawlor S."/>
            <person name="Lee H.M."/>
            <person name="Leongamornlert D.A."/>
            <person name="Laird G."/>
            <person name="Lloyd C."/>
            <person name="Lloyd D.M."/>
            <person name="Loveland J."/>
            <person name="Lovell J."/>
            <person name="McLaren S."/>
            <person name="McLay K.E."/>
            <person name="McMurray A."/>
            <person name="Mashreghi-Mohammadi M."/>
            <person name="Matthews L."/>
            <person name="Milne S."/>
            <person name="Nickerson T."/>
            <person name="Nguyen M."/>
            <person name="Overton-Larty E."/>
            <person name="Palmer S.A."/>
            <person name="Pearce A.V."/>
            <person name="Peck A.I."/>
            <person name="Pelan S."/>
            <person name="Phillimore B."/>
            <person name="Porter K."/>
            <person name="Rice C.M."/>
            <person name="Rogosin A."/>
            <person name="Ross M.T."/>
            <person name="Sarafidou T."/>
            <person name="Sehra H.K."/>
            <person name="Shownkeen R."/>
            <person name="Skuce C.D."/>
            <person name="Smith M."/>
            <person name="Standring L."/>
            <person name="Sycamore N."/>
            <person name="Tester J."/>
            <person name="Thorpe A."/>
            <person name="Torcasso W."/>
            <person name="Tracey A."/>
            <person name="Tromans A."/>
            <person name="Tsolas J."/>
            <person name="Wall M."/>
            <person name="Walsh J."/>
            <person name="Wang H."/>
            <person name="Weinstock K."/>
            <person name="West A.P."/>
            <person name="Willey D.L."/>
            <person name="Whitehead S.L."/>
            <person name="Wilming L."/>
            <person name="Wray P.W."/>
            <person name="Young L."/>
            <person name="Chen Y."/>
            <person name="Lovering R.C."/>
            <person name="Moschonas N.K."/>
            <person name="Siebert R."/>
            <person name="Fechtel K."/>
            <person name="Bentley D."/>
            <person name="Durbin R.M."/>
            <person name="Hubbard T."/>
            <person name="Doucette-Stamm L."/>
            <person name="Beck S."/>
            <person name="Smith D.R."/>
            <person name="Rogers J."/>
        </authorList>
    </citation>
    <scope>NUCLEOTIDE SEQUENCE [LARGE SCALE GENOMIC DNA]</scope>
</reference>
<reference key="6">
    <citation type="submission" date="2005-07" db="EMBL/GenBank/DDBJ databases">
        <authorList>
            <person name="Mural R.J."/>
            <person name="Istrail S."/>
            <person name="Sutton G.G."/>
            <person name="Florea L."/>
            <person name="Halpern A.L."/>
            <person name="Mobarry C.M."/>
            <person name="Lippert R."/>
            <person name="Walenz B."/>
            <person name="Shatkay H."/>
            <person name="Dew I."/>
            <person name="Miller J.R."/>
            <person name="Flanigan M.J."/>
            <person name="Edwards N.J."/>
            <person name="Bolanos R."/>
            <person name="Fasulo D."/>
            <person name="Halldorsson B.V."/>
            <person name="Hannenhalli S."/>
            <person name="Turner R."/>
            <person name="Yooseph S."/>
            <person name="Lu F."/>
            <person name="Nusskern D.R."/>
            <person name="Shue B.C."/>
            <person name="Zheng X.H."/>
            <person name="Zhong F."/>
            <person name="Delcher A.L."/>
            <person name="Huson D.H."/>
            <person name="Kravitz S.A."/>
            <person name="Mouchard L."/>
            <person name="Reinert K."/>
            <person name="Remington K.A."/>
            <person name="Clark A.G."/>
            <person name="Waterman M.S."/>
            <person name="Eichler E.E."/>
            <person name="Adams M.D."/>
            <person name="Hunkapiller M.W."/>
            <person name="Myers E.W."/>
            <person name="Venter J.C."/>
        </authorList>
    </citation>
    <scope>NUCLEOTIDE SEQUENCE [LARGE SCALE GENOMIC DNA]</scope>
</reference>
<reference key="7">
    <citation type="journal article" date="2004" name="Genome Res.">
        <title>The status, quality, and expansion of the NIH full-length cDNA project: the Mammalian Gene Collection (MGC).</title>
        <authorList>
            <consortium name="The MGC Project Team"/>
        </authorList>
    </citation>
    <scope>NUCLEOTIDE SEQUENCE [LARGE SCALE MRNA] (ISOFORM 2)</scope>
    <source>
        <tissue>Skin</tissue>
    </source>
</reference>
<reference key="8">
    <citation type="journal article" date="2009" name="Anal. Chem.">
        <title>Lys-N and trypsin cover complementary parts of the phosphoproteome in a refined SCX-based approach.</title>
        <authorList>
            <person name="Gauci S."/>
            <person name="Helbig A.O."/>
            <person name="Slijper M."/>
            <person name="Krijgsveld J."/>
            <person name="Heck A.J."/>
            <person name="Mohammed S."/>
        </authorList>
    </citation>
    <scope>ACETYLATION [LARGE SCALE ANALYSIS] AT ALA-2</scope>
    <scope>CLEAVAGE OF INITIATOR METHIONINE [LARGE SCALE ANALYSIS]</scope>
    <scope>IDENTIFICATION BY MASS SPECTROMETRY [LARGE SCALE ANALYSIS]</scope>
</reference>
<reference key="9">
    <citation type="journal article" date="2009" name="Biochem. Biophys. Res. Commun.">
        <title>Subcellular localization of adenosine kinase in mammalian cells: The long isoform of AdK is localized in the nucleus.</title>
        <authorList>
            <person name="Cui X.A."/>
            <person name="Singh B."/>
            <person name="Park J."/>
            <person name="Gupta R.S."/>
        </authorList>
    </citation>
    <scope>SUBCELLULAR LOCATION (ISOFORMS 1 AND 2)</scope>
    <scope>NUCLEAR LOCALIZATION SIGNAL</scope>
    <scope>MUTAGENESIS OF 11-LYS-LYS-12</scope>
</reference>
<reference key="10">
    <citation type="journal article" date="2011" name="BMC Syst. Biol.">
        <title>Initial characterization of the human central proteome.</title>
        <authorList>
            <person name="Burkard T.R."/>
            <person name="Planyavsky M."/>
            <person name="Kaupe I."/>
            <person name="Breitwieser F.P."/>
            <person name="Buerckstuemmer T."/>
            <person name="Bennett K.L."/>
            <person name="Superti-Furga G."/>
            <person name="Colinge J."/>
        </authorList>
    </citation>
    <scope>IDENTIFICATION BY MASS SPECTROMETRY [LARGE SCALE ANALYSIS]</scope>
</reference>
<reference key="11">
    <citation type="journal article" date="2012" name="Proc. Natl. Acad. Sci. U.S.A.">
        <title>N-terminal acetylome analyses and functional insights of the N-terminal acetyltransferase NatB.</title>
        <authorList>
            <person name="Van Damme P."/>
            <person name="Lasa M."/>
            <person name="Polevoda B."/>
            <person name="Gazquez C."/>
            <person name="Elosegui-Artola A."/>
            <person name="Kim D.S."/>
            <person name="De Juan-Pardo E."/>
            <person name="Demeyer K."/>
            <person name="Hole K."/>
            <person name="Larrea E."/>
            <person name="Timmerman E."/>
            <person name="Prieto J."/>
            <person name="Arnesen T."/>
            <person name="Sherman F."/>
            <person name="Gevaert K."/>
            <person name="Aldabe R."/>
        </authorList>
    </citation>
    <scope>ACETYLATION [LARGE SCALE ANALYSIS] AT ALA-2</scope>
    <scope>CLEAVAGE OF INITIATOR METHIONINE [LARGE SCALE ANALYSIS]</scope>
    <scope>IDENTIFICATION BY MASS SPECTROMETRY [LARGE SCALE ANALYSIS]</scope>
</reference>
<reference key="12">
    <citation type="journal article" date="2014" name="J. Proteomics">
        <title>An enzyme assisted RP-RPLC approach for in-depth analysis of human liver phosphoproteome.</title>
        <authorList>
            <person name="Bian Y."/>
            <person name="Song C."/>
            <person name="Cheng K."/>
            <person name="Dong M."/>
            <person name="Wang F."/>
            <person name="Huang J."/>
            <person name="Sun D."/>
            <person name="Wang L."/>
            <person name="Ye M."/>
            <person name="Zou H."/>
        </authorList>
    </citation>
    <scope>IDENTIFICATION BY MASS SPECTROMETRY [LARGE SCALE ANALYSIS]</scope>
    <source>
        <tissue>Liver</tissue>
    </source>
</reference>
<reference key="13">
    <citation type="journal article" date="1998" name="Biochemistry">
        <title>Structure of human adenosine kinase at 1.5-A resolution.</title>
        <authorList>
            <person name="Mathews I.I."/>
            <person name="Erion M.D."/>
            <person name="Ealick S.E."/>
        </authorList>
    </citation>
    <scope>X-RAY CRYSTALLOGRAPHY (1.50 ANGSTROMS) OF ISOFORM 2 IN COMPLEX WITH MAGNESIUM AND ADENOSINE</scope>
</reference>
<reference key="14">
    <citation type="journal article" date="2002" name="Proteomics">
        <title>Identification of the phosphotyrosine proteome from thrombin activated platelets.</title>
        <authorList>
            <person name="Maguire P.B."/>
            <person name="Wynne K.J."/>
            <person name="Harney D.F."/>
            <person name="O'Donoghue N.M."/>
            <person name="Stephens G."/>
            <person name="Fitzgerald D.J."/>
        </authorList>
    </citation>
    <scope>PHOSPHORYLATION AT TYR-77</scope>
</reference>
<reference key="15">
    <citation type="journal article" date="2011" name="Am. J. Hum. Genet.">
        <title>Adenosine kinase deficiency disrupts the methionine cycle and causes hypermethioninemia, encephalopathy, and abnormal liver function.</title>
        <authorList>
            <person name="Bjursell M.K."/>
            <person name="Blom H.J."/>
            <person name="Cayuela J.A."/>
            <person name="Engvall M.L."/>
            <person name="Lesko N."/>
            <person name="Balasubramaniam S."/>
            <person name="Brandberg G."/>
            <person name="Halldin M."/>
            <person name="Falkenberg M."/>
            <person name="Jakobs C."/>
            <person name="Smith D."/>
            <person name="Struys E."/>
            <person name="von Dobeln U."/>
            <person name="Gustafsson C.M."/>
            <person name="Lundeberg J."/>
            <person name="Wedell A."/>
        </authorList>
    </citation>
    <scope>VARIANTS HMAKD GLU-30; ALA-235 AND GLU-318</scope>
    <scope>CHARACTERIZATION OF VARIANTS HMAKD GLU-30; ALA-235 AND GLU-318</scope>
    <scope>CATALYTIC ACTIVITY</scope>
    <scope>FUNCTION</scope>
</reference>
<gene>
    <name evidence="13" type="primary">ADK</name>
</gene>
<comment type="function">
    <text evidence="3 4 5">Catalyzes the phosphorylation of the purine nucleoside adenosine at the 5' position in an ATP-dependent manner. Serves as a potential regulator of concentrations of extracellular adenosine and intracellular adenine nucleotides.</text>
</comment>
<comment type="catalytic activity">
    <reaction evidence="3 4 5">
        <text>adenosine + ATP = AMP + ADP + H(+)</text>
        <dbReference type="Rhea" id="RHEA:20824"/>
        <dbReference type="ChEBI" id="CHEBI:15378"/>
        <dbReference type="ChEBI" id="CHEBI:16335"/>
        <dbReference type="ChEBI" id="CHEBI:30616"/>
        <dbReference type="ChEBI" id="CHEBI:456215"/>
        <dbReference type="ChEBI" id="CHEBI:456216"/>
        <dbReference type="EC" id="2.7.1.20"/>
    </reaction>
    <physiologicalReaction direction="left-to-right" evidence="12">
        <dbReference type="Rhea" id="RHEA:20825"/>
    </physiologicalReaction>
</comment>
<comment type="cofactor">
    <cofactor evidence="5">
        <name>Mg(2+)</name>
        <dbReference type="ChEBI" id="CHEBI:18420"/>
    </cofactor>
    <text evidence="5">Binds 3 Mg(2+) ions per subunit.</text>
</comment>
<comment type="activity regulation">
    <text evidence="5">Activity is inhibited by 5-iodotubercidin and 5'-amino-5'-deoxyadenosine.</text>
</comment>
<comment type="biophysicochemical properties">
    <molecule>Isoform 1</molecule>
    <kinetics>
        <KM evidence="4">41 nM for adenosine</KM>
        <KM evidence="5">0.13 uM for ATP</KM>
    </kinetics>
</comment>
<comment type="biophysicochemical properties">
    <molecule>Isoform 2</molecule>
    <kinetics>
        <KM evidence="5">0.12 uM for ATP</KM>
    </kinetics>
</comment>
<comment type="pathway">
    <text>Purine metabolism; AMP biosynthesis via salvage pathway; AMP from adenosine: step 1/1.</text>
</comment>
<comment type="subunit">
    <text>Monomer.</text>
</comment>
<comment type="subcellular location">
    <molecule>Isoform 1</molecule>
    <subcellularLocation>
        <location evidence="2">Nucleus</location>
    </subcellularLocation>
</comment>
<comment type="subcellular location">
    <molecule>Isoform 2</molecule>
    <subcellularLocation>
        <location evidence="2">Cytoplasm</location>
    </subcellularLocation>
</comment>
<comment type="alternative products">
    <event type="alternative splicing"/>
    <isoform>
        <id>P55263-1</id>
        <name>1</name>
        <name>AK-L</name>
        <name evidence="10">Long</name>
        <sequence type="displayed"/>
    </isoform>
    <isoform>
        <id>P55263-2</id>
        <name>2</name>
        <name>AK-S</name>
        <name evidence="10">Short</name>
        <sequence type="described" ref="VSP_046713"/>
    </isoform>
    <isoform>
        <id>P55263-3</id>
        <name>3</name>
        <sequence type="described" ref="VSP_043526"/>
    </isoform>
    <isoform>
        <id>P55263-4</id>
        <name>4</name>
        <sequence type="described" ref="VSP_004668"/>
    </isoform>
</comment>
<comment type="tissue specificity">
    <text evidence="5">Widely expressed. Highest level in placenta, liver, muscle and kidney.</text>
</comment>
<comment type="disease" evidence="3">
    <disease id="DI-03295">
        <name>Hypermethioninemia due to adenosine kinase deficiency</name>
        <acronym>HMAKD</acronym>
        <description>A metabolic disorder characterized by global developmental delay, early-onset seizures, mild dysmorphic features, and characteristic biochemical anomalies, including persistent hypermethioninemia with increased levels of S-adenosylmethionine and S-adenosylhomocysteine. Homocysteine levels are typically normal.</description>
        <dbReference type="MIM" id="614300"/>
    </disease>
    <text>The disease is caused by variants affecting the gene represented in this entry.</text>
</comment>
<comment type="similarity">
    <text evidence="11">Belongs to the carbohydrate kinase PfkB family.</text>
</comment>
<comment type="sequence caution" evidence="11">
    <conflict type="frameshift">
        <sequence resource="EMBL-CDS" id="AAB01689"/>
    </conflict>
</comment>
<name>ADK_HUMAN</name>
<feature type="initiator methionine" description="Removed" evidence="15 16">
    <location>
        <position position="1"/>
    </location>
</feature>
<feature type="chain" id="PRO_0000080053" description="Adenosine kinase">
    <location>
        <begin position="2"/>
        <end position="362"/>
    </location>
</feature>
<feature type="short sequence motif" description="Nuclear localization signal" evidence="2">
    <location>
        <begin position="8"/>
        <end position="16"/>
    </location>
</feature>
<feature type="active site" description="Proton acceptor" evidence="6 14">
    <location>
        <position position="317"/>
    </location>
</feature>
<feature type="binding site" evidence="6 14">
    <location>
        <position position="35"/>
    </location>
    <ligand>
        <name>adenosine</name>
        <dbReference type="ChEBI" id="CHEBI:16335"/>
    </ligand>
</feature>
<feature type="binding site" evidence="6 14">
    <location>
        <position position="49"/>
    </location>
    <ligand>
        <name>Mg(2+)</name>
        <dbReference type="ChEBI" id="CHEBI:18420"/>
        <label>1</label>
    </ligand>
</feature>
<feature type="binding site" evidence="6 14">
    <location>
        <position position="147"/>
    </location>
    <ligand>
        <name>Mg(2+)</name>
        <dbReference type="ChEBI" id="CHEBI:18420"/>
        <label>2</label>
    </ligand>
</feature>
<feature type="binding site" evidence="6 14">
    <location>
        <position position="148"/>
    </location>
    <ligand>
        <name>Mg(2+)</name>
        <dbReference type="ChEBI" id="CHEBI:18420"/>
        <label>2</label>
    </ligand>
</feature>
<feature type="binding site" evidence="6 14">
    <location>
        <position position="306"/>
    </location>
    <ligand>
        <name>adenosine</name>
        <dbReference type="ChEBI" id="CHEBI:16335"/>
    </ligand>
</feature>
<feature type="modified residue" description="N-acetylalanine" evidence="15 16">
    <location>
        <position position="2"/>
    </location>
</feature>
<feature type="modified residue" description="Phosphotyrosine" evidence="1">
    <location>
        <position position="77"/>
    </location>
</feature>
<feature type="splice variant" id="VSP_004668" description="In isoform 4." evidence="7">
    <original>MAAAEEEPKPKKLKVEAPQALRENILFGMGNPLLDISAVVDKDFLDKYSLKPNDQILAEDKHKEL</original>
    <variation>MTSVRENILFGMGNPLLDISAVVDKDFLDK</variation>
    <location>
        <begin position="1"/>
        <end position="65"/>
    </location>
</feature>
<feature type="splice variant" id="VSP_046713" description="In isoform 2." evidence="7 8 9 10">
    <original>MAAAEEEPKPKKLKVEAPQAL</original>
    <variation>MTSV</variation>
    <location>
        <begin position="1"/>
        <end position="21"/>
    </location>
</feature>
<feature type="splice variant" id="VSP_043526" description="In isoform 3." evidence="7">
    <location>
        <begin position="186"/>
        <end position="242"/>
    </location>
</feature>
<feature type="sequence variant" id="VAR_066640" description="In HMAKD; the mutant shows some residual adenosine kinase activity; dbSNP:rs397514454." evidence="3">
    <original>G</original>
    <variation>E</variation>
    <location>
        <position position="30"/>
    </location>
</feature>
<feature type="sequence variant" id="VAR_066641" description="In HMAKD; the mutant shows some residual adenosine kinase activity; dbSNP:rs397514453." evidence="3">
    <original>D</original>
    <variation>A</variation>
    <location>
        <position position="235"/>
    </location>
</feature>
<feature type="sequence variant" id="VAR_066642" description="In HMAKD; complete loss of adenosine kinase activity; dbSNP:rs397514452." evidence="3">
    <original>A</original>
    <variation>E</variation>
    <location>
        <position position="318"/>
    </location>
</feature>
<feature type="mutagenesis site" description="Abolishes nuclear localization." evidence="2">
    <original>KK</original>
    <variation>AA</variation>
    <variation>AD</variation>
    <location>
        <begin position="11"/>
        <end position="12"/>
    </location>
</feature>
<feature type="sequence conflict" description="In Ref. 1; AA sequence." evidence="11" ref="1">
    <original>H</original>
    <variation>A</variation>
    <location>
        <position position="98"/>
    </location>
</feature>
<feature type="sequence conflict" description="In Ref. 2; AAB01689." evidence="11" ref="2">
    <original>N</original>
    <variation>D</variation>
    <location>
        <position position="133"/>
    </location>
</feature>
<feature type="sequence conflict" description="In Ref. 2; AAB01689." evidence="11" ref="2">
    <original>K</original>
    <variation>R</variation>
    <location>
        <position position="171"/>
    </location>
</feature>
<feature type="sequence conflict" description="In Ref. 1; AAA97893." evidence="11" ref="1">
    <original>T</original>
    <variation>H</variation>
    <location>
        <position position="190"/>
    </location>
</feature>
<feature type="sequence conflict" description="In Ref. 7; AAH03568." evidence="11" ref="7">
    <original>I</original>
    <variation>F</variation>
    <location>
        <position position="219"/>
    </location>
</feature>
<feature type="sequence conflict" description="In Ref. 1; AA sequence." evidence="11" ref="1">
    <original>S</original>
    <variation>V</variation>
    <location>
        <position position="273"/>
    </location>
</feature>
<feature type="sequence conflict" description="In Ref. 1; AA sequence." evidence="11" ref="1">
    <original>I</original>
    <variation>N</variation>
    <location>
        <position position="289"/>
    </location>
</feature>
<feature type="sequence conflict" description="In Ref. 2; AAB01689." evidence="11" ref="2">
    <original>K</original>
    <variation>R</variation>
    <location>
        <position position="307"/>
    </location>
</feature>
<feature type="strand" evidence="17">
    <location>
        <begin position="26"/>
        <end position="29"/>
    </location>
</feature>
<feature type="strand" evidence="17">
    <location>
        <begin position="33"/>
        <end position="39"/>
    </location>
</feature>
<feature type="helix" evidence="17">
    <location>
        <begin position="42"/>
        <end position="47"/>
    </location>
</feature>
<feature type="strand" evidence="17">
    <location>
        <begin position="52"/>
        <end position="57"/>
    </location>
</feature>
<feature type="helix" evidence="17">
    <location>
        <begin position="60"/>
        <end position="62"/>
    </location>
</feature>
<feature type="helix" evidence="17">
    <location>
        <begin position="63"/>
        <end position="72"/>
    </location>
</feature>
<feature type="strand" evidence="17">
    <location>
        <begin position="76"/>
        <end position="80"/>
    </location>
</feature>
<feature type="helix" evidence="17">
    <location>
        <begin position="82"/>
        <end position="94"/>
    </location>
</feature>
<feature type="strand" evidence="18">
    <location>
        <begin position="96"/>
        <end position="99"/>
    </location>
</feature>
<feature type="strand" evidence="17">
    <location>
        <begin position="101"/>
        <end position="110"/>
    </location>
</feature>
<feature type="helix" evidence="17">
    <location>
        <begin position="111"/>
        <end position="122"/>
    </location>
</feature>
<feature type="strand" evidence="17">
    <location>
        <begin position="126"/>
        <end position="135"/>
    </location>
</feature>
<feature type="strand" evidence="17">
    <location>
        <begin position="139"/>
        <end position="145"/>
    </location>
</feature>
<feature type="strand" evidence="17">
    <location>
        <begin position="148"/>
        <end position="154"/>
    </location>
</feature>
<feature type="helix" evidence="17">
    <location>
        <begin position="156"/>
        <end position="160"/>
    </location>
</feature>
<feature type="helix" evidence="17">
    <location>
        <begin position="163"/>
        <end position="165"/>
    </location>
</feature>
<feature type="turn" evidence="17">
    <location>
        <begin position="166"/>
        <end position="168"/>
    </location>
</feature>
<feature type="helix" evidence="17">
    <location>
        <begin position="170"/>
        <end position="178"/>
    </location>
</feature>
<feature type="strand" evidence="17">
    <location>
        <begin position="180"/>
        <end position="185"/>
    </location>
</feature>
<feature type="helix" evidence="17">
    <location>
        <begin position="186"/>
        <end position="190"/>
    </location>
</feature>
<feature type="helix" evidence="17">
    <location>
        <begin position="193"/>
        <end position="205"/>
    </location>
</feature>
<feature type="strand" evidence="17">
    <location>
        <begin position="209"/>
        <end position="213"/>
    </location>
</feature>
<feature type="helix" evidence="17">
    <location>
        <begin position="217"/>
        <end position="222"/>
    </location>
</feature>
<feature type="helix" evidence="17">
    <location>
        <begin position="224"/>
        <end position="230"/>
    </location>
</feature>
<feature type="helix" evidence="17">
    <location>
        <begin position="231"/>
        <end position="233"/>
    </location>
</feature>
<feature type="strand" evidence="17">
    <location>
        <begin position="235"/>
        <end position="240"/>
    </location>
</feature>
<feature type="helix" evidence="17">
    <location>
        <begin position="241"/>
        <end position="250"/>
    </location>
</feature>
<feature type="helix" evidence="17">
    <location>
        <begin position="258"/>
        <end position="266"/>
    </location>
</feature>
<feature type="strand" evidence="17">
    <location>
        <begin position="278"/>
        <end position="283"/>
    </location>
</feature>
<feature type="strand" evidence="17">
    <location>
        <begin position="286"/>
        <end position="291"/>
    </location>
</feature>
<feature type="strand" evidence="17">
    <location>
        <begin position="296"/>
        <end position="299"/>
    </location>
</feature>
<feature type="helix" evidence="17">
    <location>
        <begin position="312"/>
        <end position="327"/>
    </location>
</feature>
<feature type="turn" evidence="17">
    <location>
        <begin position="328"/>
        <end position="330"/>
    </location>
</feature>
<feature type="helix" evidence="17">
    <location>
        <begin position="333"/>
        <end position="347"/>
    </location>
</feature>
<feature type="strand" evidence="17">
    <location>
        <begin position="350"/>
        <end position="353"/>
    </location>
</feature>
<protein>
    <recommendedName>
        <fullName>Adenosine kinase</fullName>
        <shortName>AK</shortName>
        <ecNumber evidence="3 4 5">2.7.1.20</ecNumber>
    </recommendedName>
    <alternativeName>
        <fullName>Adenosine 5'-phosphotransferase</fullName>
    </alternativeName>
</protein>
<organism>
    <name type="scientific">Homo sapiens</name>
    <name type="common">Human</name>
    <dbReference type="NCBI Taxonomy" id="9606"/>
    <lineage>
        <taxon>Eukaryota</taxon>
        <taxon>Metazoa</taxon>
        <taxon>Chordata</taxon>
        <taxon>Craniata</taxon>
        <taxon>Vertebrata</taxon>
        <taxon>Euteleostomi</taxon>
        <taxon>Mammalia</taxon>
        <taxon>Eutheria</taxon>
        <taxon>Euarchontoglires</taxon>
        <taxon>Primates</taxon>
        <taxon>Haplorrhini</taxon>
        <taxon>Catarrhini</taxon>
        <taxon>Hominidae</taxon>
        <taxon>Homo</taxon>
    </lineage>
</organism>
<sequence>MAAAEEEPKPKKLKVEAPQALRENILFGMGNPLLDISAVVDKDFLDKYSLKPNDQILAEDKHKELFDELVKKFKVEYHAGGSTQNSIKVAQWMIQQPHKAATFFGCIGIDKFGEILKRKAAEAHVDAHYYEQNEQPTGTCAACITGDNRSLIANLAAANCYKKEKHLDLEKNWMLVEKARVCYIAGFFLTVSPESVLKVAHHASENNRIFTLNLSAPFISQFYKESLMKVMPYVDILFGNETEAATFAREQGFETKDIKEIAKKTQALPKMNSKRQRIVIFTQGRDDTIMATESEVTAFAVLDQDQKEIIDTNGAGDAFVGGFLSQLVSDKPLTECIRAGHYAASIIIRRTGCTFPEKPDFH</sequence>
<dbReference type="EC" id="2.7.1.20" evidence="3 4 5"/>
<dbReference type="EMBL" id="U50196">
    <property type="protein sequence ID" value="AAA97893.1"/>
    <property type="molecule type" value="mRNA"/>
</dbReference>
<dbReference type="EMBL" id="U33936">
    <property type="protein sequence ID" value="AAB01689.1"/>
    <property type="status" value="ALT_FRAME"/>
    <property type="molecule type" value="mRNA"/>
</dbReference>
<dbReference type="EMBL" id="U90338">
    <property type="protein sequence ID" value="AAB50234.1"/>
    <property type="molecule type" value="mRNA"/>
</dbReference>
<dbReference type="EMBL" id="U90339">
    <property type="protein sequence ID" value="AAB50235.1"/>
    <property type="molecule type" value="mRNA"/>
</dbReference>
<dbReference type="EMBL" id="AK290633">
    <property type="protein sequence ID" value="BAF83322.1"/>
    <property type="molecule type" value="mRNA"/>
</dbReference>
<dbReference type="EMBL" id="AK301590">
    <property type="protein sequence ID" value="BAH13519.1"/>
    <property type="molecule type" value="mRNA"/>
</dbReference>
<dbReference type="EMBL" id="AK302706">
    <property type="protein sequence ID" value="BAH13786.1"/>
    <property type="molecule type" value="mRNA"/>
</dbReference>
<dbReference type="EMBL" id="AC012046">
    <property type="status" value="NOT_ANNOTATED_CDS"/>
    <property type="molecule type" value="Genomic_DNA"/>
</dbReference>
<dbReference type="EMBL" id="AC022026">
    <property type="status" value="NOT_ANNOTATED_CDS"/>
    <property type="molecule type" value="Genomic_DNA"/>
</dbReference>
<dbReference type="EMBL" id="AC022540">
    <property type="status" value="NOT_ANNOTATED_CDS"/>
    <property type="molecule type" value="Genomic_DNA"/>
</dbReference>
<dbReference type="EMBL" id="AC091699">
    <property type="status" value="NOT_ANNOTATED_CDS"/>
    <property type="molecule type" value="Genomic_DNA"/>
</dbReference>
<dbReference type="EMBL" id="AL357037">
    <property type="status" value="NOT_ANNOTATED_CDS"/>
    <property type="molecule type" value="Genomic_DNA"/>
</dbReference>
<dbReference type="EMBL" id="AL731576">
    <property type="status" value="NOT_ANNOTATED_CDS"/>
    <property type="molecule type" value="Genomic_DNA"/>
</dbReference>
<dbReference type="EMBL" id="CH471083">
    <property type="protein sequence ID" value="EAW54555.1"/>
    <property type="molecule type" value="Genomic_DNA"/>
</dbReference>
<dbReference type="EMBL" id="CH471083">
    <property type="protein sequence ID" value="EAW54556.1"/>
    <property type="molecule type" value="Genomic_DNA"/>
</dbReference>
<dbReference type="EMBL" id="BC003568">
    <property type="protein sequence ID" value="AAH03568.1"/>
    <property type="molecule type" value="mRNA"/>
</dbReference>
<dbReference type="CCDS" id="CCDS55716.1">
    <molecule id="P55263-3"/>
</dbReference>
<dbReference type="CCDS" id="CCDS55717.1">
    <molecule id="P55263-4"/>
</dbReference>
<dbReference type="CCDS" id="CCDS7343.1">
    <molecule id="P55263-1"/>
</dbReference>
<dbReference type="CCDS" id="CCDS7344.1">
    <molecule id="P55263-2"/>
</dbReference>
<dbReference type="PIR" id="JC5363">
    <property type="entry name" value="JC5363"/>
</dbReference>
<dbReference type="PIR" id="JC5364">
    <property type="entry name" value="JC5364"/>
</dbReference>
<dbReference type="RefSeq" id="NP_001114.2">
    <molecule id="P55263-2"/>
    <property type="nucleotide sequence ID" value="NM_001123.3"/>
</dbReference>
<dbReference type="RefSeq" id="NP_001189378.1">
    <molecule id="P55263-4"/>
    <property type="nucleotide sequence ID" value="NM_001202449.2"/>
</dbReference>
<dbReference type="RefSeq" id="NP_001189379.1">
    <molecule id="P55263-3"/>
    <property type="nucleotide sequence ID" value="NM_001202450.2"/>
</dbReference>
<dbReference type="RefSeq" id="NP_006712.2">
    <molecule id="P55263-1"/>
    <property type="nucleotide sequence ID" value="NM_006721.3"/>
</dbReference>
<dbReference type="PDB" id="1BX4">
    <property type="method" value="X-ray"/>
    <property type="resolution" value="1.50 A"/>
    <property type="chains" value="A=22-362"/>
</dbReference>
<dbReference type="PDB" id="2I6A">
    <property type="method" value="X-ray"/>
    <property type="resolution" value="2.20 A"/>
    <property type="chains" value="A/B/C/D=22-362"/>
</dbReference>
<dbReference type="PDB" id="2I6B">
    <property type="method" value="X-ray"/>
    <property type="resolution" value="2.30 A"/>
    <property type="chains" value="A/B=22-362"/>
</dbReference>
<dbReference type="PDB" id="4O1L">
    <property type="method" value="X-ray"/>
    <property type="resolution" value="2.50 A"/>
    <property type="chains" value="A/B=17-362"/>
</dbReference>
<dbReference type="PDBsum" id="1BX4"/>
<dbReference type="PDBsum" id="2I6A"/>
<dbReference type="PDBsum" id="2I6B"/>
<dbReference type="PDBsum" id="4O1L"/>
<dbReference type="SMR" id="P55263"/>
<dbReference type="BioGRID" id="106644">
    <property type="interactions" value="58"/>
</dbReference>
<dbReference type="FunCoup" id="P55263">
    <property type="interactions" value="3281"/>
</dbReference>
<dbReference type="IntAct" id="P55263">
    <property type="interactions" value="11"/>
</dbReference>
<dbReference type="MINT" id="P55263"/>
<dbReference type="STRING" id="9606.ENSP00000443965"/>
<dbReference type="BindingDB" id="P55263"/>
<dbReference type="ChEMBL" id="CHEMBL3589"/>
<dbReference type="DrugBank" id="DB07280">
    <property type="generic name" value="5-[4-(DIMETHYLAMINO)PHENYL]-6-[(6-MORPHOLIN-4-YLPYRIDIN-3-YL)ETHYNYL]PYRIMIDIN-4-AMINE"/>
</dbReference>
<dbReference type="DrugBank" id="DB07173">
    <property type="generic name" value="7-(5-DEOXY-BETA-D-RIBOFURANOSYL)-5-IODO-7H-PYRROLO[2,3-D]PYRIMIDIN-4-AMINE"/>
</dbReference>
<dbReference type="DrugBank" id="DB01048">
    <property type="generic name" value="Abacavir"/>
</dbReference>
<dbReference type="DrugBank" id="DB00640">
    <property type="generic name" value="Adenosine"/>
</dbReference>
<dbReference type="DrugBank" id="DB00131">
    <property type="generic name" value="Adenosine phosphate"/>
</dbReference>
<dbReference type="DrugBank" id="DB00171">
    <property type="generic name" value="ATP"/>
</dbReference>
<dbReference type="DrugBank" id="DB00811">
    <property type="generic name" value="Ribavirin"/>
</dbReference>
<dbReference type="DrugCentral" id="P55263"/>
<dbReference type="GuidetoPHARMACOLOGY" id="1231"/>
<dbReference type="GlyGen" id="P55263">
    <property type="glycosylation" value="1 site, 1 O-linked glycan (1 site)"/>
</dbReference>
<dbReference type="iPTMnet" id="P55263"/>
<dbReference type="MetOSite" id="P55263"/>
<dbReference type="PhosphoSitePlus" id="P55263"/>
<dbReference type="SwissPalm" id="P55263"/>
<dbReference type="BioMuta" id="ADK"/>
<dbReference type="DMDM" id="6840802"/>
<dbReference type="REPRODUCTION-2DPAGE" id="IPI00234368"/>
<dbReference type="CPTAC" id="CPTAC-162"/>
<dbReference type="CPTAC" id="CPTAC-2925"/>
<dbReference type="CPTAC" id="CPTAC-2926"/>
<dbReference type="jPOST" id="P55263"/>
<dbReference type="MassIVE" id="P55263"/>
<dbReference type="PaxDb" id="9606-ENSP00000286621"/>
<dbReference type="PeptideAtlas" id="P55263"/>
<dbReference type="ProteomicsDB" id="56823">
    <molecule id="P55263-1"/>
</dbReference>
<dbReference type="ProteomicsDB" id="56824">
    <molecule id="P55263-2"/>
</dbReference>
<dbReference type="ProteomicsDB" id="56825">
    <molecule id="P55263-3"/>
</dbReference>
<dbReference type="ProteomicsDB" id="6910"/>
<dbReference type="Pumba" id="P55263"/>
<dbReference type="Antibodypedia" id="29612">
    <property type="antibodies" value="456 antibodies from 37 providers"/>
</dbReference>
<dbReference type="DNASU" id="132"/>
<dbReference type="Ensembl" id="ENST00000372734.5">
    <molecule id="P55263-2"/>
    <property type="protein sequence ID" value="ENSP00000361819.3"/>
    <property type="gene ID" value="ENSG00000156110.15"/>
</dbReference>
<dbReference type="Ensembl" id="ENST00000539909.6">
    <molecule id="P55263-1"/>
    <property type="protein sequence ID" value="ENSP00000443965.2"/>
    <property type="gene ID" value="ENSG00000156110.15"/>
</dbReference>
<dbReference type="Ensembl" id="ENST00000672429.1">
    <molecule id="P55263-3"/>
    <property type="protein sequence ID" value="ENSP00000500292.1"/>
    <property type="gene ID" value="ENSG00000156110.15"/>
</dbReference>
<dbReference type="Ensembl" id="ENST00000673027.1">
    <molecule id="P55263-4"/>
    <property type="protein sequence ID" value="ENSP00000500201.1"/>
    <property type="gene ID" value="ENSG00000156110.15"/>
</dbReference>
<dbReference type="GeneID" id="132"/>
<dbReference type="KEGG" id="hsa:132"/>
<dbReference type="MANE-Select" id="ENST00000539909.6">
    <property type="protein sequence ID" value="ENSP00000443965.2"/>
    <property type="RefSeq nucleotide sequence ID" value="NM_006721.4"/>
    <property type="RefSeq protein sequence ID" value="NP_006712.2"/>
</dbReference>
<dbReference type="UCSC" id="uc001jwi.4">
    <molecule id="P55263-1"/>
    <property type="organism name" value="human"/>
</dbReference>
<dbReference type="AGR" id="HGNC:257"/>
<dbReference type="CTD" id="132"/>
<dbReference type="DisGeNET" id="132"/>
<dbReference type="GeneCards" id="ADK"/>
<dbReference type="HGNC" id="HGNC:257">
    <property type="gene designation" value="ADK"/>
</dbReference>
<dbReference type="HPA" id="ENSG00000156110">
    <property type="expression patterns" value="Tissue enhanced (liver)"/>
</dbReference>
<dbReference type="MalaCards" id="ADK"/>
<dbReference type="MIM" id="102750">
    <property type="type" value="gene"/>
</dbReference>
<dbReference type="MIM" id="614300">
    <property type="type" value="phenotype"/>
</dbReference>
<dbReference type="neXtProt" id="NX_P55263"/>
<dbReference type="OpenTargets" id="ENSG00000156110"/>
<dbReference type="Orphanet" id="289290">
    <property type="disease" value="Hypermethioninemia encephalopathy due to adenosine kinase deficiency"/>
</dbReference>
<dbReference type="PharmGKB" id="PA24579"/>
<dbReference type="VEuPathDB" id="HostDB:ENSG00000156110"/>
<dbReference type="eggNOG" id="KOG2854">
    <property type="taxonomic scope" value="Eukaryota"/>
</dbReference>
<dbReference type="GeneTree" id="ENSGT00390000014320"/>
<dbReference type="HOGENOM" id="CLU_045832_0_0_1"/>
<dbReference type="InParanoid" id="P55263"/>
<dbReference type="OMA" id="YCATECI"/>
<dbReference type="OrthoDB" id="432447at2759"/>
<dbReference type="PAN-GO" id="P55263">
    <property type="GO annotations" value="4 GO annotations based on evolutionary models"/>
</dbReference>
<dbReference type="PhylomeDB" id="P55263"/>
<dbReference type="TreeFam" id="TF300745"/>
<dbReference type="BioCyc" id="MetaCyc:HS08097-MONOMER"/>
<dbReference type="BRENDA" id="2.7.1.20">
    <property type="organism ID" value="2681"/>
</dbReference>
<dbReference type="PathwayCommons" id="P55263"/>
<dbReference type="Reactome" id="R-HSA-74217">
    <property type="pathway name" value="Purine salvage"/>
</dbReference>
<dbReference type="Reactome" id="R-HSA-9755088">
    <property type="pathway name" value="Ribavirin ADME"/>
</dbReference>
<dbReference type="SABIO-RK" id="P55263"/>
<dbReference type="SignaLink" id="P55263"/>
<dbReference type="SIGNOR" id="P55263"/>
<dbReference type="UniPathway" id="UPA00588">
    <property type="reaction ID" value="UER00659"/>
</dbReference>
<dbReference type="BioGRID-ORCS" id="132">
    <property type="hits" value="11 hits in 1173 CRISPR screens"/>
</dbReference>
<dbReference type="CD-CODE" id="91857CE7">
    <property type="entry name" value="Nucleolus"/>
</dbReference>
<dbReference type="ChiTaRS" id="ADK">
    <property type="organism name" value="human"/>
</dbReference>
<dbReference type="EvolutionaryTrace" id="P55263"/>
<dbReference type="GeneWiki" id="ADK_(gene)"/>
<dbReference type="GenomeRNAi" id="132"/>
<dbReference type="Pharos" id="P55263">
    <property type="development level" value="Tchem"/>
</dbReference>
<dbReference type="PRO" id="PR:P55263"/>
<dbReference type="Proteomes" id="UP000005640">
    <property type="component" value="Chromosome 10"/>
</dbReference>
<dbReference type="RNAct" id="P55263">
    <property type="molecule type" value="protein"/>
</dbReference>
<dbReference type="Bgee" id="ENSG00000156110">
    <property type="expression patterns" value="Expressed in cartilage tissue and 202 other cell types or tissues"/>
</dbReference>
<dbReference type="ExpressionAtlas" id="P55263">
    <property type="expression patterns" value="baseline and differential"/>
</dbReference>
<dbReference type="GO" id="GO:0005829">
    <property type="term" value="C:cytosol"/>
    <property type="evidence" value="ECO:0000314"/>
    <property type="project" value="HPA"/>
</dbReference>
<dbReference type="GO" id="GO:0005654">
    <property type="term" value="C:nucleoplasm"/>
    <property type="evidence" value="ECO:0000314"/>
    <property type="project" value="HPA"/>
</dbReference>
<dbReference type="GO" id="GO:0005634">
    <property type="term" value="C:nucleus"/>
    <property type="evidence" value="ECO:0000318"/>
    <property type="project" value="GO_Central"/>
</dbReference>
<dbReference type="GO" id="GO:0005886">
    <property type="term" value="C:plasma membrane"/>
    <property type="evidence" value="ECO:0000314"/>
    <property type="project" value="HPA"/>
</dbReference>
<dbReference type="GO" id="GO:0004001">
    <property type="term" value="F:adenosine kinase activity"/>
    <property type="evidence" value="ECO:0000318"/>
    <property type="project" value="GO_Central"/>
</dbReference>
<dbReference type="GO" id="GO:0005524">
    <property type="term" value="F:ATP binding"/>
    <property type="evidence" value="ECO:0007669"/>
    <property type="project" value="UniProtKB-KW"/>
</dbReference>
<dbReference type="GO" id="GO:0004136">
    <property type="term" value="F:deoxyadenosine kinase activity"/>
    <property type="evidence" value="ECO:0007669"/>
    <property type="project" value="Ensembl"/>
</dbReference>
<dbReference type="GO" id="GO:0046872">
    <property type="term" value="F:metal ion binding"/>
    <property type="evidence" value="ECO:0007669"/>
    <property type="project" value="UniProtKB-KW"/>
</dbReference>
<dbReference type="GO" id="GO:0003723">
    <property type="term" value="F:RNA binding"/>
    <property type="evidence" value="ECO:0007005"/>
    <property type="project" value="UniProtKB"/>
</dbReference>
<dbReference type="GO" id="GO:0044209">
    <property type="term" value="P:AMP salvage"/>
    <property type="evidence" value="ECO:0007669"/>
    <property type="project" value="UniProtKB-UniPathway"/>
</dbReference>
<dbReference type="GO" id="GO:0106383">
    <property type="term" value="P:dAMP salvage"/>
    <property type="evidence" value="ECO:0007669"/>
    <property type="project" value="Ensembl"/>
</dbReference>
<dbReference type="GO" id="GO:0006175">
    <property type="term" value="P:dATP biosynthetic process"/>
    <property type="evidence" value="ECO:0007669"/>
    <property type="project" value="Ensembl"/>
</dbReference>
<dbReference type="GO" id="GO:0032263">
    <property type="term" value="P:GMP salvage"/>
    <property type="evidence" value="ECO:0007669"/>
    <property type="project" value="Ensembl"/>
</dbReference>
<dbReference type="GO" id="GO:0006144">
    <property type="term" value="P:purine nucleobase metabolic process"/>
    <property type="evidence" value="ECO:0000318"/>
    <property type="project" value="GO_Central"/>
</dbReference>
<dbReference type="GO" id="GO:0006166">
    <property type="term" value="P:purine ribonucleoside salvage"/>
    <property type="evidence" value="ECO:0007669"/>
    <property type="project" value="UniProtKB-KW"/>
</dbReference>
<dbReference type="GO" id="GO:0009156">
    <property type="term" value="P:ribonucleoside monophosphate biosynthetic process"/>
    <property type="evidence" value="ECO:0000304"/>
    <property type="project" value="ProtInc"/>
</dbReference>
<dbReference type="CDD" id="cd01168">
    <property type="entry name" value="adenosine_kinase"/>
    <property type="match status" value="1"/>
</dbReference>
<dbReference type="FunFam" id="3.40.1190.20:FF:000175">
    <property type="entry name" value="Adenosine kinase"/>
    <property type="match status" value="1"/>
</dbReference>
<dbReference type="FunFam" id="3.30.1110.10:FF:000001">
    <property type="entry name" value="Adenosine kinase a"/>
    <property type="match status" value="1"/>
</dbReference>
<dbReference type="Gene3D" id="3.40.1190.20">
    <property type="match status" value="1"/>
</dbReference>
<dbReference type="InterPro" id="IPR001805">
    <property type="entry name" value="Adenokinase"/>
</dbReference>
<dbReference type="InterPro" id="IPR002173">
    <property type="entry name" value="Carboh/pur_kinase_PfkB_CS"/>
</dbReference>
<dbReference type="InterPro" id="IPR011611">
    <property type="entry name" value="PfkB_dom"/>
</dbReference>
<dbReference type="InterPro" id="IPR029056">
    <property type="entry name" value="Ribokinase-like"/>
</dbReference>
<dbReference type="PANTHER" id="PTHR45769">
    <property type="entry name" value="ADENOSINE KINASE"/>
    <property type="match status" value="1"/>
</dbReference>
<dbReference type="PANTHER" id="PTHR45769:SF3">
    <property type="entry name" value="ADENOSINE KINASE"/>
    <property type="match status" value="1"/>
</dbReference>
<dbReference type="Pfam" id="PF00294">
    <property type="entry name" value="PfkB"/>
    <property type="match status" value="1"/>
</dbReference>
<dbReference type="PRINTS" id="PR00989">
    <property type="entry name" value="ADENOKINASE"/>
</dbReference>
<dbReference type="SUPFAM" id="SSF53613">
    <property type="entry name" value="Ribokinase-like"/>
    <property type="match status" value="1"/>
</dbReference>
<dbReference type="PROSITE" id="PS00584">
    <property type="entry name" value="PFKB_KINASES_2"/>
    <property type="match status" value="1"/>
</dbReference>